<organism>
    <name type="scientific">Xanthomonas oryzae pv. oryzae (strain MAFF 311018)</name>
    <dbReference type="NCBI Taxonomy" id="342109"/>
    <lineage>
        <taxon>Bacteria</taxon>
        <taxon>Pseudomonadati</taxon>
        <taxon>Pseudomonadota</taxon>
        <taxon>Gammaproteobacteria</taxon>
        <taxon>Lysobacterales</taxon>
        <taxon>Lysobacteraceae</taxon>
        <taxon>Xanthomonas</taxon>
    </lineage>
</organism>
<sequence length="41" mass="4872">MKVLSSLKSAKTRHRDCKVVRRRGKVFVICKSNPRFKARQR</sequence>
<accession>Q2P3S4</accession>
<reference key="1">
    <citation type="journal article" date="2005" name="Jpn. Agric. Res. Q.">
        <title>Genome sequence of Xanthomonas oryzae pv. oryzae suggests contribution of large numbers of effector genes and insertion sequences to its race diversity.</title>
        <authorList>
            <person name="Ochiai H."/>
            <person name="Inoue Y."/>
            <person name="Takeya M."/>
            <person name="Sasaki A."/>
            <person name="Kaku H."/>
        </authorList>
    </citation>
    <scope>NUCLEOTIDE SEQUENCE [LARGE SCALE GENOMIC DNA]</scope>
    <source>
        <strain>MAFF 311018</strain>
    </source>
</reference>
<protein>
    <recommendedName>
        <fullName evidence="1">Large ribosomal subunit protein bL36</fullName>
    </recommendedName>
    <alternativeName>
        <fullName evidence="2">50S ribosomal protein L36</fullName>
    </alternativeName>
</protein>
<feature type="chain" id="PRO_0000302334" description="Large ribosomal subunit protein bL36">
    <location>
        <begin position="1"/>
        <end position="41"/>
    </location>
</feature>
<name>RL36_XANOM</name>
<proteinExistence type="inferred from homology"/>
<evidence type="ECO:0000255" key="1">
    <source>
        <dbReference type="HAMAP-Rule" id="MF_00251"/>
    </source>
</evidence>
<evidence type="ECO:0000305" key="2"/>
<keyword id="KW-0687">Ribonucleoprotein</keyword>
<keyword id="KW-0689">Ribosomal protein</keyword>
<dbReference type="EMBL" id="AP008229">
    <property type="protein sequence ID" value="BAE68803.1"/>
    <property type="molecule type" value="Genomic_DNA"/>
</dbReference>
<dbReference type="SMR" id="Q2P3S4"/>
<dbReference type="KEGG" id="xom:XOO2048"/>
<dbReference type="HOGENOM" id="CLU_135723_3_3_6"/>
<dbReference type="GO" id="GO:1990904">
    <property type="term" value="C:ribonucleoprotein complex"/>
    <property type="evidence" value="ECO:0007669"/>
    <property type="project" value="UniProtKB-KW"/>
</dbReference>
<dbReference type="GO" id="GO:0005840">
    <property type="term" value="C:ribosome"/>
    <property type="evidence" value="ECO:0007669"/>
    <property type="project" value="UniProtKB-KW"/>
</dbReference>
<dbReference type="GO" id="GO:0003735">
    <property type="term" value="F:structural constituent of ribosome"/>
    <property type="evidence" value="ECO:0007669"/>
    <property type="project" value="InterPro"/>
</dbReference>
<dbReference type="GO" id="GO:0006412">
    <property type="term" value="P:translation"/>
    <property type="evidence" value="ECO:0007669"/>
    <property type="project" value="UniProtKB-UniRule"/>
</dbReference>
<dbReference type="HAMAP" id="MF_00251">
    <property type="entry name" value="Ribosomal_bL36"/>
    <property type="match status" value="1"/>
</dbReference>
<dbReference type="InterPro" id="IPR000473">
    <property type="entry name" value="Ribosomal_bL36"/>
</dbReference>
<dbReference type="InterPro" id="IPR035977">
    <property type="entry name" value="Ribosomal_bL36_sp"/>
</dbReference>
<dbReference type="InterPro" id="IPR047621">
    <property type="entry name" value="Ribosomal_L36_bact"/>
</dbReference>
<dbReference type="NCBIfam" id="NF002021">
    <property type="entry name" value="PRK00831.1"/>
    <property type="match status" value="1"/>
</dbReference>
<dbReference type="NCBIfam" id="TIGR01022">
    <property type="entry name" value="rpmJ_bact"/>
    <property type="match status" value="1"/>
</dbReference>
<dbReference type="PANTHER" id="PTHR47781">
    <property type="entry name" value="50S RIBOSOMAL PROTEIN L36 2"/>
    <property type="match status" value="1"/>
</dbReference>
<dbReference type="PANTHER" id="PTHR47781:SF1">
    <property type="entry name" value="LARGE RIBOSOMAL SUBUNIT PROTEIN BL36B"/>
    <property type="match status" value="1"/>
</dbReference>
<dbReference type="Pfam" id="PF00444">
    <property type="entry name" value="Ribosomal_L36"/>
    <property type="match status" value="1"/>
</dbReference>
<dbReference type="SUPFAM" id="SSF57840">
    <property type="entry name" value="Ribosomal protein L36"/>
    <property type="match status" value="1"/>
</dbReference>
<dbReference type="PROSITE" id="PS00828">
    <property type="entry name" value="RIBOSOMAL_L36"/>
    <property type="match status" value="1"/>
</dbReference>
<gene>
    <name evidence="1" type="primary">rpmJ</name>
    <name type="ordered locus">XOO2048</name>
</gene>
<comment type="similarity">
    <text evidence="1">Belongs to the bacterial ribosomal protein bL36 family.</text>
</comment>